<dbReference type="EMBL" id="AE004439">
    <property type="protein sequence ID" value="AAK04088.1"/>
    <property type="molecule type" value="Genomic_DNA"/>
</dbReference>
<dbReference type="RefSeq" id="WP_005725112.1">
    <property type="nucleotide sequence ID" value="NC_002663.1"/>
</dbReference>
<dbReference type="SMR" id="Q9CJK1"/>
<dbReference type="STRING" id="272843.PM2004"/>
<dbReference type="EnsemblBacteria" id="AAK04088">
    <property type="protein sequence ID" value="AAK04088"/>
    <property type="gene ID" value="PM2004"/>
</dbReference>
<dbReference type="GeneID" id="77207331"/>
<dbReference type="KEGG" id="pmu:PM2004"/>
<dbReference type="HOGENOM" id="CLU_082268_0_0_6"/>
<dbReference type="OrthoDB" id="9802729at2"/>
<dbReference type="Proteomes" id="UP000000809">
    <property type="component" value="Chromosome"/>
</dbReference>
<dbReference type="GO" id="GO:0005829">
    <property type="term" value="C:cytosol"/>
    <property type="evidence" value="ECO:0007669"/>
    <property type="project" value="TreeGrafter"/>
</dbReference>
<dbReference type="GO" id="GO:0005524">
    <property type="term" value="F:ATP binding"/>
    <property type="evidence" value="ECO:0007669"/>
    <property type="project" value="TreeGrafter"/>
</dbReference>
<dbReference type="GO" id="GO:0030234">
    <property type="term" value="F:enzyme regulator activity"/>
    <property type="evidence" value="ECO:0007669"/>
    <property type="project" value="InterPro"/>
</dbReference>
<dbReference type="GO" id="GO:0006808">
    <property type="term" value="P:regulation of nitrogen utilization"/>
    <property type="evidence" value="ECO:0007669"/>
    <property type="project" value="InterPro"/>
</dbReference>
<dbReference type="FunFam" id="3.30.70.120:FF:000001">
    <property type="entry name" value="Nitrogen regulatory protein P-II"/>
    <property type="match status" value="1"/>
</dbReference>
<dbReference type="Gene3D" id="3.30.70.120">
    <property type="match status" value="1"/>
</dbReference>
<dbReference type="InterPro" id="IPR002187">
    <property type="entry name" value="N-reg_PII"/>
</dbReference>
<dbReference type="InterPro" id="IPR011322">
    <property type="entry name" value="N-reg_PII-like_a/b"/>
</dbReference>
<dbReference type="InterPro" id="IPR015867">
    <property type="entry name" value="N-reg_PII/ATP_PRibTrfase_C"/>
</dbReference>
<dbReference type="InterPro" id="IPR017918">
    <property type="entry name" value="N-reg_PII_CS"/>
</dbReference>
<dbReference type="InterPro" id="IPR002332">
    <property type="entry name" value="N-reg_PII_urydylation_site"/>
</dbReference>
<dbReference type="NCBIfam" id="NF008111">
    <property type="entry name" value="PRK10858.1"/>
    <property type="match status" value="1"/>
</dbReference>
<dbReference type="PANTHER" id="PTHR30115">
    <property type="entry name" value="NITROGEN REGULATORY PROTEIN P-II"/>
    <property type="match status" value="1"/>
</dbReference>
<dbReference type="PANTHER" id="PTHR30115:SF11">
    <property type="entry name" value="NITROGEN REGULATORY PROTEIN P-II HOMOLOG"/>
    <property type="match status" value="1"/>
</dbReference>
<dbReference type="Pfam" id="PF00543">
    <property type="entry name" value="P-II"/>
    <property type="match status" value="1"/>
</dbReference>
<dbReference type="PIRSF" id="PIRSF039144">
    <property type="entry name" value="GlnB"/>
    <property type="match status" value="1"/>
</dbReference>
<dbReference type="PRINTS" id="PR00340">
    <property type="entry name" value="PIIGLNB"/>
</dbReference>
<dbReference type="SMART" id="SM00938">
    <property type="entry name" value="P-II"/>
    <property type="match status" value="1"/>
</dbReference>
<dbReference type="SUPFAM" id="SSF54913">
    <property type="entry name" value="GlnB-like"/>
    <property type="match status" value="1"/>
</dbReference>
<dbReference type="PROSITE" id="PS00638">
    <property type="entry name" value="PII_GLNB_CTER"/>
    <property type="match status" value="1"/>
</dbReference>
<dbReference type="PROSITE" id="PS51343">
    <property type="entry name" value="PII_GLNB_DOM"/>
    <property type="match status" value="1"/>
</dbReference>
<dbReference type="PROSITE" id="PS00496">
    <property type="entry name" value="PII_GLNB_UMP"/>
    <property type="match status" value="1"/>
</dbReference>
<reference key="1">
    <citation type="journal article" date="2001" name="Proc. Natl. Acad. Sci. U.S.A.">
        <title>Complete genomic sequence of Pasteurella multocida Pm70.</title>
        <authorList>
            <person name="May B.J."/>
            <person name="Zhang Q."/>
            <person name="Li L.L."/>
            <person name="Paustian M.L."/>
            <person name="Whittam T.S."/>
            <person name="Kapur V."/>
        </authorList>
    </citation>
    <scope>NUCLEOTIDE SEQUENCE [LARGE SCALE GENOMIC DNA]</scope>
    <source>
        <strain>Pm70</strain>
    </source>
</reference>
<gene>
    <name type="primary">glnB</name>
    <name type="ordered locus">PM2004</name>
</gene>
<proteinExistence type="inferred from homology"/>
<keyword id="KW-0547">Nucleotide-binding</keyword>
<keyword id="KW-0597">Phosphoprotein</keyword>
<keyword id="KW-1185">Reference proteome</keyword>
<keyword id="KW-0804">Transcription</keyword>
<keyword id="KW-0805">Transcription regulation</keyword>
<sequence length="112" mass="12684">MKKIEAIIKPFKLDDVRESLSDVGITGMTVTEVRGFGRQKGHTELYRGAEYMVDFLPKVKMEIVVTDEQVDQCIEAIMETAQTGKIGDGKIFVYDVERVIRIRTGEENEDAI</sequence>
<name>GLNB_PASMU</name>
<protein>
    <recommendedName>
        <fullName>Nitrogen regulatory protein P-II</fullName>
    </recommendedName>
</protein>
<evidence type="ECO:0000250" key="1"/>
<evidence type="ECO:0000255" key="2">
    <source>
        <dbReference type="PROSITE-ProRule" id="PRU00675"/>
    </source>
</evidence>
<comment type="function">
    <text evidence="1">P-II indirectly controls the transcription of the glutamine synthetase gene (GlnA). P-II prevents NR-II-catalyzed conversion of NR-I to NR-I-phosphate, the transcriptional activator of GlnA. When P-II is uridylylated to P-II-UMP, these events are reversed. When the ratio of Gln to 2-ketoglutarate decreases, P-II is uridylylated to P-II-UMP, which causes the deadenylation of glutamine synthetase by GlnE, so activating the enzyme (By similarity).</text>
</comment>
<comment type="subunit">
    <text evidence="1">Homotrimer.</text>
</comment>
<comment type="PTM">
    <text evidence="1">Uridylylated/deuridylylated by GlnD.</text>
</comment>
<comment type="similarity">
    <text evidence="2">Belongs to the P(II) protein family.</text>
</comment>
<organism>
    <name type="scientific">Pasteurella multocida (strain Pm70)</name>
    <dbReference type="NCBI Taxonomy" id="272843"/>
    <lineage>
        <taxon>Bacteria</taxon>
        <taxon>Pseudomonadati</taxon>
        <taxon>Pseudomonadota</taxon>
        <taxon>Gammaproteobacteria</taxon>
        <taxon>Pasteurellales</taxon>
        <taxon>Pasteurellaceae</taxon>
        <taxon>Pasteurella</taxon>
    </lineage>
</organism>
<feature type="chain" id="PRO_0000139781" description="Nitrogen regulatory protein P-II">
    <location>
        <begin position="1"/>
        <end position="112"/>
    </location>
</feature>
<feature type="modified residue" description="O-UMP-tyrosine" evidence="2">
    <location>
        <position position="51"/>
    </location>
</feature>
<accession>Q9CJK1</accession>